<reference evidence="4" key="1">
    <citation type="journal article" date="2014" name="BMC Biol.">
        <title>A comprehensive evaluation of rodent malaria parasite genomes and gene expression.</title>
        <authorList>
            <person name="Otto T.D."/>
            <person name="Bohme U."/>
            <person name="Jackson A.P."/>
            <person name="Hunt M."/>
            <person name="Franke-Fayard B."/>
            <person name="Hoeijmakers W.A."/>
            <person name="Religa A.A."/>
            <person name="Robertson L."/>
            <person name="Sanders M."/>
            <person name="Ogun S.A."/>
            <person name="Cunningham D."/>
            <person name="Erhart A."/>
            <person name="Billker O."/>
            <person name="Khan S.M."/>
            <person name="Stunnenberg H.G."/>
            <person name="Langhorne J."/>
            <person name="Holder A.A."/>
            <person name="Waters A.P."/>
            <person name="Newbold C.I."/>
            <person name="Pain A."/>
            <person name="Berriman M."/>
            <person name="Janse C.J."/>
        </authorList>
    </citation>
    <scope>NUCLEOTIDE SEQUENCE [LARGE SCALE GENOMIC DNA]</scope>
    <source>
        <strain evidence="4">AS</strain>
    </source>
</reference>
<reference evidence="5" key="2">
    <citation type="submission" date="2016-08" db="EMBL/GenBank/DDBJ databases">
        <authorList>
            <consortium name="Pathogen Informatics"/>
        </authorList>
    </citation>
    <scope>NUCLEOTIDE SEQUENCE [LARGE SCALE GENOMIC DNA]</scope>
    <source>
        <strain evidence="5">CB</strain>
    </source>
</reference>
<dbReference type="EC" id="3.13.2.1"/>
<dbReference type="EMBL" id="LK022889">
    <property type="protein sequence ID" value="VTZ69833.1"/>
    <property type="molecule type" value="Genomic_DNA"/>
</dbReference>
<dbReference type="EMBL" id="LT608164">
    <property type="protein sequence ID" value="SCN62375.1"/>
    <property type="molecule type" value="Genomic_DNA"/>
</dbReference>
<dbReference type="RefSeq" id="XP_746209.1">
    <property type="nucleotide sequence ID" value="XM_741116.1"/>
</dbReference>
<dbReference type="SMR" id="Q4XZZ5"/>
<dbReference type="EnsemblProtists" id="CDR14921">
    <property type="protein sequence ID" value="CDR14921"/>
    <property type="gene ID" value="PCHAS_123620"/>
</dbReference>
<dbReference type="GeneID" id="3499336"/>
<dbReference type="KEGG" id="pcb:PCHAS_1236200"/>
<dbReference type="VEuPathDB" id="PlasmoDB:PCHAS_1236200"/>
<dbReference type="eggNOG" id="KOG1370">
    <property type="taxonomic scope" value="Eukaryota"/>
</dbReference>
<dbReference type="HOGENOM" id="CLU_025194_2_1_1"/>
<dbReference type="OrthoDB" id="10007170at2759"/>
<dbReference type="UniPathway" id="UPA00314">
    <property type="reaction ID" value="UER00076"/>
</dbReference>
<dbReference type="Proteomes" id="UP000071118">
    <property type="component" value="Chromosome 12"/>
</dbReference>
<dbReference type="Proteomes" id="UP000195489">
    <property type="component" value="Chromosome 12"/>
</dbReference>
<dbReference type="GO" id="GO:0005829">
    <property type="term" value="C:cytosol"/>
    <property type="evidence" value="ECO:0007669"/>
    <property type="project" value="TreeGrafter"/>
</dbReference>
<dbReference type="GO" id="GO:0004013">
    <property type="term" value="F:adenosylhomocysteinase activity"/>
    <property type="evidence" value="ECO:0007669"/>
    <property type="project" value="TreeGrafter"/>
</dbReference>
<dbReference type="GO" id="GO:0006730">
    <property type="term" value="P:one-carbon metabolic process"/>
    <property type="evidence" value="ECO:0007669"/>
    <property type="project" value="UniProtKB-KW"/>
</dbReference>
<dbReference type="GO" id="GO:0033353">
    <property type="term" value="P:S-adenosylmethionine cycle"/>
    <property type="evidence" value="ECO:0007669"/>
    <property type="project" value="TreeGrafter"/>
</dbReference>
<dbReference type="CDD" id="cd00401">
    <property type="entry name" value="SAHH"/>
    <property type="match status" value="1"/>
</dbReference>
<dbReference type="FunFam" id="3.40.50.1480:FF:000011">
    <property type="entry name" value="Adenosylhomocysteinase"/>
    <property type="match status" value="1"/>
</dbReference>
<dbReference type="FunFam" id="3.40.50.720:FF:000004">
    <property type="entry name" value="Adenosylhomocysteinase"/>
    <property type="match status" value="1"/>
</dbReference>
<dbReference type="Gene3D" id="3.40.50.1480">
    <property type="entry name" value="Adenosylhomocysteinase-like"/>
    <property type="match status" value="1"/>
</dbReference>
<dbReference type="Gene3D" id="3.40.50.720">
    <property type="entry name" value="NAD(P)-binding Rossmann-like Domain"/>
    <property type="match status" value="1"/>
</dbReference>
<dbReference type="HAMAP" id="MF_00563">
    <property type="entry name" value="AdoHcyase"/>
    <property type="match status" value="1"/>
</dbReference>
<dbReference type="InterPro" id="IPR042172">
    <property type="entry name" value="Adenosylhomocyst_ase-like_sf"/>
</dbReference>
<dbReference type="InterPro" id="IPR000043">
    <property type="entry name" value="Adenosylhomocysteinase-like"/>
</dbReference>
<dbReference type="InterPro" id="IPR015878">
    <property type="entry name" value="Ado_hCys_hydrolase_NAD-bd"/>
</dbReference>
<dbReference type="InterPro" id="IPR036291">
    <property type="entry name" value="NAD(P)-bd_dom_sf"/>
</dbReference>
<dbReference type="InterPro" id="IPR020082">
    <property type="entry name" value="S-Ado-L-homoCys_hydrolase_CS"/>
</dbReference>
<dbReference type="NCBIfam" id="TIGR00936">
    <property type="entry name" value="ahcY"/>
    <property type="match status" value="1"/>
</dbReference>
<dbReference type="NCBIfam" id="NF004005">
    <property type="entry name" value="PRK05476.2-3"/>
    <property type="match status" value="1"/>
</dbReference>
<dbReference type="PANTHER" id="PTHR23420">
    <property type="entry name" value="ADENOSYLHOMOCYSTEINASE"/>
    <property type="match status" value="1"/>
</dbReference>
<dbReference type="PANTHER" id="PTHR23420:SF0">
    <property type="entry name" value="ADENOSYLHOMOCYSTEINASE"/>
    <property type="match status" value="1"/>
</dbReference>
<dbReference type="Pfam" id="PF05221">
    <property type="entry name" value="AdoHcyase"/>
    <property type="match status" value="1"/>
</dbReference>
<dbReference type="Pfam" id="PF00670">
    <property type="entry name" value="AdoHcyase_NAD"/>
    <property type="match status" value="1"/>
</dbReference>
<dbReference type="PIRSF" id="PIRSF001109">
    <property type="entry name" value="Ad_hcy_hydrolase"/>
    <property type="match status" value="1"/>
</dbReference>
<dbReference type="SMART" id="SM00996">
    <property type="entry name" value="AdoHcyase"/>
    <property type="match status" value="1"/>
</dbReference>
<dbReference type="SMART" id="SM00997">
    <property type="entry name" value="AdoHcyase_NAD"/>
    <property type="match status" value="1"/>
</dbReference>
<dbReference type="SUPFAM" id="SSF52283">
    <property type="entry name" value="Formate/glycerate dehydrogenase catalytic domain-like"/>
    <property type="match status" value="2"/>
</dbReference>
<dbReference type="SUPFAM" id="SSF51735">
    <property type="entry name" value="NAD(P)-binding Rossmann-fold domains"/>
    <property type="match status" value="1"/>
</dbReference>
<dbReference type="PROSITE" id="PS00738">
    <property type="entry name" value="ADOHCYASE_1"/>
    <property type="match status" value="1"/>
</dbReference>
<dbReference type="PROSITE" id="PS00739">
    <property type="entry name" value="ADOHCYASE_2"/>
    <property type="match status" value="1"/>
</dbReference>
<feature type="chain" id="PRO_0000116916" description="Adenosylhomocysteinase">
    <location>
        <begin position="1"/>
        <end position="479"/>
    </location>
</feature>
<feature type="binding site" evidence="1">
    <location>
        <position position="56"/>
    </location>
    <ligand>
        <name>substrate</name>
    </ligand>
</feature>
<feature type="binding site" evidence="1">
    <location>
        <position position="133"/>
    </location>
    <ligand>
        <name>substrate</name>
    </ligand>
</feature>
<feature type="binding site" evidence="1">
    <location>
        <position position="199"/>
    </location>
    <ligand>
        <name>substrate</name>
    </ligand>
</feature>
<feature type="binding site" evidence="1">
    <location>
        <begin position="200"/>
        <end position="202"/>
    </location>
    <ligand>
        <name>NAD(+)</name>
        <dbReference type="ChEBI" id="CHEBI:57540"/>
    </ligand>
</feature>
<feature type="binding site" evidence="1">
    <location>
        <position position="229"/>
    </location>
    <ligand>
        <name>substrate</name>
    </ligand>
</feature>
<feature type="binding site" evidence="1">
    <location>
        <position position="233"/>
    </location>
    <ligand>
        <name>substrate</name>
    </ligand>
</feature>
<feature type="binding site" evidence="1">
    <location>
        <position position="234"/>
    </location>
    <ligand>
        <name>NAD(+)</name>
        <dbReference type="ChEBI" id="CHEBI:57540"/>
    </ligand>
</feature>
<feature type="binding site" evidence="1">
    <location>
        <begin position="263"/>
        <end position="268"/>
    </location>
    <ligand>
        <name>NAD(+)</name>
        <dbReference type="ChEBI" id="CHEBI:57540"/>
    </ligand>
</feature>
<feature type="binding site" evidence="1">
    <location>
        <position position="286"/>
    </location>
    <ligand>
        <name>NAD(+)</name>
        <dbReference type="ChEBI" id="CHEBI:57540"/>
    </ligand>
</feature>
<feature type="binding site" evidence="1">
    <location>
        <position position="321"/>
    </location>
    <ligand>
        <name>NAD(+)</name>
        <dbReference type="ChEBI" id="CHEBI:57540"/>
    </ligand>
</feature>
<feature type="binding site" evidence="1">
    <location>
        <begin position="342"/>
        <end position="344"/>
    </location>
    <ligand>
        <name>NAD(+)</name>
        <dbReference type="ChEBI" id="CHEBI:57540"/>
    </ligand>
</feature>
<feature type="binding site" evidence="1">
    <location>
        <position position="390"/>
    </location>
    <ligand>
        <name>NAD(+)</name>
        <dbReference type="ChEBI" id="CHEBI:57540"/>
    </ligand>
</feature>
<organism evidence="4">
    <name type="scientific">Plasmodium chabaudi chabaudi</name>
    <dbReference type="NCBI Taxonomy" id="31271"/>
    <lineage>
        <taxon>Eukaryota</taxon>
        <taxon>Sar</taxon>
        <taxon>Alveolata</taxon>
        <taxon>Apicomplexa</taxon>
        <taxon>Aconoidasida</taxon>
        <taxon>Haemosporida</taxon>
        <taxon>Plasmodiidae</taxon>
        <taxon>Plasmodium</taxon>
        <taxon>Plasmodium (Vinckeia)</taxon>
    </lineage>
</organism>
<evidence type="ECO:0000250" key="1"/>
<evidence type="ECO:0000305" key="2"/>
<evidence type="ECO:0000312" key="3">
    <source>
        <dbReference type="EMBL" id="VTZ69833.1"/>
    </source>
</evidence>
<evidence type="ECO:0000312" key="4">
    <source>
        <dbReference type="Proteomes" id="UP000071118"/>
    </source>
</evidence>
<evidence type="ECO:0000312" key="5">
    <source>
        <dbReference type="Proteomes" id="UP000195489"/>
    </source>
</evidence>
<protein>
    <recommendedName>
        <fullName>Adenosylhomocysteinase</fullName>
        <shortName>AdoHcyase</shortName>
        <ecNumber>3.13.2.1</ecNumber>
    </recommendedName>
    <alternativeName>
        <fullName>S-adenosyl-L-homocysteine hydrolase</fullName>
    </alternativeName>
</protein>
<sequence length="479" mass="53671">MYDSTSKIKDLSLAPFGKLQMEISETEMPGLMTIREEYEKLKPLKGAKITGCLHMTIETALLMETLQKLGAKLRWCSCNIYSTLDYAAAAVSTLENVSVFAWRGETLEEYWWCVEKALTWGENGEGPDLIVDDGADASYLVHKGAEYEKLYEEKKILPDPETGKNEEERCFLSLIKSSILKNPKKWTNMSKKIIGMSEETTTGVLRVKKIEKNNGLLFTAINVNDSVTKQKYDNIYGCRHSLPDGLMRATDFMISGKIVVICGYGDVGKGCASAMKGLGARVYVTEVDPICAIQAVMEGFNVVTLEEIVEKGDFFVTCTGNVDIIKLEHLLKMKNNAVVGNIGHFDDEIQIADLFSHEGIEIENVKPQVDRVTLPNGNKIIVLAQGRLLNLACATGHPAFVMSFSFCNQVFAQLELWENRNTGKYEKNKSYILPKELDEKVAYYHLKKLNATLTELDDNQCEFLGVSKNGPFKSEAYRY</sequence>
<name>SAHH_PLACU</name>
<gene>
    <name type="ORF">PC000295.02.0</name>
    <name evidence="3" type="ORF">PCHAS_1236200</name>
</gene>
<keyword id="KW-0378">Hydrolase</keyword>
<keyword id="KW-0520">NAD</keyword>
<keyword id="KW-0554">One-carbon metabolism</keyword>
<comment type="function">
    <text evidence="1">Adenosylhomocysteine is a competitive inhibitor of S-adenosyl-L-methionine-dependent methyl transferase reactions; therefore adenosylhomocysteinase may play a key role in the control of methylations via regulation of the intracellular concentration of adenosylhomocysteine.</text>
</comment>
<comment type="catalytic activity">
    <reaction>
        <text>S-adenosyl-L-homocysteine + H2O = L-homocysteine + adenosine</text>
        <dbReference type="Rhea" id="RHEA:21708"/>
        <dbReference type="ChEBI" id="CHEBI:15377"/>
        <dbReference type="ChEBI" id="CHEBI:16335"/>
        <dbReference type="ChEBI" id="CHEBI:57856"/>
        <dbReference type="ChEBI" id="CHEBI:58199"/>
        <dbReference type="EC" id="3.13.2.1"/>
    </reaction>
</comment>
<comment type="cofactor">
    <cofactor evidence="1">
        <name>NAD(+)</name>
        <dbReference type="ChEBI" id="CHEBI:57540"/>
    </cofactor>
    <text evidence="1">Binds 1 NAD(+) per subunit.</text>
</comment>
<comment type="pathway">
    <text>Amino-acid biosynthesis; L-homocysteine biosynthesis; L-homocysteine from S-adenosyl-L-homocysteine: step 1/1.</text>
</comment>
<comment type="subunit">
    <text evidence="1">Homotetramer.</text>
</comment>
<comment type="similarity">
    <text evidence="2">Belongs to the adenosylhomocysteinase family.</text>
</comment>
<proteinExistence type="inferred from homology"/>
<accession>Q4XZZ5</accession>
<accession>A0A077TPU0</accession>